<accession>B7N0V6</accession>
<gene>
    <name evidence="1" type="primary">argG</name>
    <name type="ordered locus">ECED1_3831</name>
</gene>
<organism>
    <name type="scientific">Escherichia coli O81 (strain ED1a)</name>
    <dbReference type="NCBI Taxonomy" id="585397"/>
    <lineage>
        <taxon>Bacteria</taxon>
        <taxon>Pseudomonadati</taxon>
        <taxon>Pseudomonadota</taxon>
        <taxon>Gammaproteobacteria</taxon>
        <taxon>Enterobacterales</taxon>
        <taxon>Enterobacteriaceae</taxon>
        <taxon>Escherichia</taxon>
    </lineage>
</organism>
<feature type="chain" id="PRO_1000146931" description="Argininosuccinate synthase">
    <location>
        <begin position="1"/>
        <end position="447"/>
    </location>
</feature>
<feature type="binding site" evidence="1">
    <location>
        <begin position="17"/>
        <end position="25"/>
    </location>
    <ligand>
        <name>ATP</name>
        <dbReference type="ChEBI" id="CHEBI:30616"/>
    </ligand>
</feature>
<feature type="binding site" evidence="1">
    <location>
        <position position="43"/>
    </location>
    <ligand>
        <name>ATP</name>
        <dbReference type="ChEBI" id="CHEBI:30616"/>
    </ligand>
</feature>
<feature type="binding site" evidence="1">
    <location>
        <position position="99"/>
    </location>
    <ligand>
        <name>L-citrulline</name>
        <dbReference type="ChEBI" id="CHEBI:57743"/>
    </ligand>
</feature>
<feature type="binding site" evidence="1">
    <location>
        <position position="129"/>
    </location>
    <ligand>
        <name>ATP</name>
        <dbReference type="ChEBI" id="CHEBI:30616"/>
    </ligand>
</feature>
<feature type="binding site" evidence="1">
    <location>
        <position position="131"/>
    </location>
    <ligand>
        <name>ATP</name>
        <dbReference type="ChEBI" id="CHEBI:30616"/>
    </ligand>
</feature>
<feature type="binding site" evidence="1">
    <location>
        <position position="131"/>
    </location>
    <ligand>
        <name>L-aspartate</name>
        <dbReference type="ChEBI" id="CHEBI:29991"/>
    </ligand>
</feature>
<feature type="binding site" evidence="1">
    <location>
        <position position="135"/>
    </location>
    <ligand>
        <name>L-aspartate</name>
        <dbReference type="ChEBI" id="CHEBI:29991"/>
    </ligand>
</feature>
<feature type="binding site" evidence="1">
    <location>
        <position position="135"/>
    </location>
    <ligand>
        <name>L-citrulline</name>
        <dbReference type="ChEBI" id="CHEBI:57743"/>
    </ligand>
</feature>
<feature type="binding site" evidence="1">
    <location>
        <position position="136"/>
    </location>
    <ligand>
        <name>ATP</name>
        <dbReference type="ChEBI" id="CHEBI:30616"/>
    </ligand>
</feature>
<feature type="binding site" evidence="1">
    <location>
        <position position="136"/>
    </location>
    <ligand>
        <name>L-aspartate</name>
        <dbReference type="ChEBI" id="CHEBI:29991"/>
    </ligand>
</feature>
<feature type="binding site" evidence="1">
    <location>
        <position position="139"/>
    </location>
    <ligand>
        <name>L-citrulline</name>
        <dbReference type="ChEBI" id="CHEBI:57743"/>
    </ligand>
</feature>
<feature type="binding site" evidence="1">
    <location>
        <position position="192"/>
    </location>
    <ligand>
        <name>L-citrulline</name>
        <dbReference type="ChEBI" id="CHEBI:57743"/>
    </ligand>
</feature>
<feature type="binding site" evidence="1">
    <location>
        <position position="194"/>
    </location>
    <ligand>
        <name>ATP</name>
        <dbReference type="ChEBI" id="CHEBI:30616"/>
    </ligand>
</feature>
<feature type="binding site" evidence="1">
    <location>
        <position position="201"/>
    </location>
    <ligand>
        <name>L-citrulline</name>
        <dbReference type="ChEBI" id="CHEBI:57743"/>
    </ligand>
</feature>
<feature type="binding site" evidence="1">
    <location>
        <position position="203"/>
    </location>
    <ligand>
        <name>L-citrulline</name>
        <dbReference type="ChEBI" id="CHEBI:57743"/>
    </ligand>
</feature>
<feature type="binding site" evidence="1">
    <location>
        <position position="280"/>
    </location>
    <ligand>
        <name>L-citrulline</name>
        <dbReference type="ChEBI" id="CHEBI:57743"/>
    </ligand>
</feature>
<comment type="catalytic activity">
    <reaction evidence="1">
        <text>L-citrulline + L-aspartate + ATP = 2-(N(omega)-L-arginino)succinate + AMP + diphosphate + H(+)</text>
        <dbReference type="Rhea" id="RHEA:10932"/>
        <dbReference type="ChEBI" id="CHEBI:15378"/>
        <dbReference type="ChEBI" id="CHEBI:29991"/>
        <dbReference type="ChEBI" id="CHEBI:30616"/>
        <dbReference type="ChEBI" id="CHEBI:33019"/>
        <dbReference type="ChEBI" id="CHEBI:57472"/>
        <dbReference type="ChEBI" id="CHEBI:57743"/>
        <dbReference type="ChEBI" id="CHEBI:456215"/>
        <dbReference type="EC" id="6.3.4.5"/>
    </reaction>
</comment>
<comment type="pathway">
    <text evidence="1">Amino-acid biosynthesis; L-arginine biosynthesis; L-arginine from L-ornithine and carbamoyl phosphate: step 2/3.</text>
</comment>
<comment type="subunit">
    <text evidence="1">Homotetramer.</text>
</comment>
<comment type="subcellular location">
    <subcellularLocation>
        <location evidence="1">Cytoplasm</location>
    </subcellularLocation>
</comment>
<comment type="similarity">
    <text evidence="1">Belongs to the argininosuccinate synthase family. Type 2 subfamily.</text>
</comment>
<sequence length="447" mass="49898">MTTILKHLPVGQRIGIAFSGGLDTSAALLWMRQKGAVPYAYTANLGQPDEEDYDAIPRRAMEYGAENARLIDCRKQLVAEGIAAIQCGAFHNTTGGLTYFNTTPLGRAVTGTMLVAAMKEDGVNIWGDGSTYKGNDIERFYRYGLLTNAELQIYKPWLDTDFIDELGGRHEMSEFMIACGFDYKMSVEKAYSTDSNMLGATHEAKDLEYLNSSVKIVNPIMGVKFWDESVKIPAEEVTVRFEQGHPVALNGKTFSDDVEMMLEANRIGGRHGLGMSDQIENRIIEAKSRGIYEAPGMALLHIAYERLLTGIHNEDTIEQYHAHGRQLGRLLYQGRWFDSQALMLRDSLQRWVASQITGEVTLELRRGNDYSILNTVSENLTYKPERLTMEKGDSVFSPDDRIGQLTMRNLDITDTREKLFGYAKTGLLSSSAASGVPQVENLENKGQ</sequence>
<proteinExistence type="inferred from homology"/>
<name>ASSY_ECO81</name>
<dbReference type="EC" id="6.3.4.5" evidence="1"/>
<dbReference type="EMBL" id="CU928162">
    <property type="protein sequence ID" value="CAR09974.2"/>
    <property type="molecule type" value="Genomic_DNA"/>
</dbReference>
<dbReference type="RefSeq" id="WP_000207680.1">
    <property type="nucleotide sequence ID" value="NC_011745.1"/>
</dbReference>
<dbReference type="SMR" id="B7N0V6"/>
<dbReference type="KEGG" id="ecq:ECED1_3831"/>
<dbReference type="HOGENOM" id="CLU_032784_4_1_6"/>
<dbReference type="UniPathway" id="UPA00068">
    <property type="reaction ID" value="UER00113"/>
</dbReference>
<dbReference type="Proteomes" id="UP000000748">
    <property type="component" value="Chromosome"/>
</dbReference>
<dbReference type="GO" id="GO:0005737">
    <property type="term" value="C:cytoplasm"/>
    <property type="evidence" value="ECO:0007669"/>
    <property type="project" value="UniProtKB-SubCell"/>
</dbReference>
<dbReference type="GO" id="GO:0004055">
    <property type="term" value="F:argininosuccinate synthase activity"/>
    <property type="evidence" value="ECO:0007669"/>
    <property type="project" value="UniProtKB-UniRule"/>
</dbReference>
<dbReference type="GO" id="GO:0005524">
    <property type="term" value="F:ATP binding"/>
    <property type="evidence" value="ECO:0007669"/>
    <property type="project" value="UniProtKB-UniRule"/>
</dbReference>
<dbReference type="GO" id="GO:0042803">
    <property type="term" value="F:protein homodimerization activity"/>
    <property type="evidence" value="ECO:0007669"/>
    <property type="project" value="InterPro"/>
</dbReference>
<dbReference type="GO" id="GO:0000053">
    <property type="term" value="P:argininosuccinate metabolic process"/>
    <property type="evidence" value="ECO:0007669"/>
    <property type="project" value="TreeGrafter"/>
</dbReference>
<dbReference type="GO" id="GO:0006526">
    <property type="term" value="P:L-arginine biosynthetic process"/>
    <property type="evidence" value="ECO:0007669"/>
    <property type="project" value="UniProtKB-UniRule"/>
</dbReference>
<dbReference type="GO" id="GO:0000050">
    <property type="term" value="P:urea cycle"/>
    <property type="evidence" value="ECO:0007669"/>
    <property type="project" value="TreeGrafter"/>
</dbReference>
<dbReference type="CDD" id="cd01999">
    <property type="entry name" value="ASS"/>
    <property type="match status" value="1"/>
</dbReference>
<dbReference type="FunFam" id="1.10.287.400:FF:000001">
    <property type="entry name" value="Argininosuccinate synthase"/>
    <property type="match status" value="1"/>
</dbReference>
<dbReference type="Gene3D" id="1.10.287.400">
    <property type="match status" value="1"/>
</dbReference>
<dbReference type="Gene3D" id="3.90.1260.10">
    <property type="entry name" value="Argininosuccinate synthetase, chain A, domain 2"/>
    <property type="match status" value="1"/>
</dbReference>
<dbReference type="Gene3D" id="3.40.50.620">
    <property type="entry name" value="HUPs"/>
    <property type="match status" value="1"/>
</dbReference>
<dbReference type="HAMAP" id="MF_00581">
    <property type="entry name" value="Arg_succ_synth_type2"/>
    <property type="match status" value="1"/>
</dbReference>
<dbReference type="InterPro" id="IPR023437">
    <property type="entry name" value="Arg_succ_synth_type2_subfam"/>
</dbReference>
<dbReference type="InterPro" id="IPR048268">
    <property type="entry name" value="Arginosuc_syn_C"/>
</dbReference>
<dbReference type="InterPro" id="IPR048267">
    <property type="entry name" value="Arginosuc_syn_N"/>
</dbReference>
<dbReference type="InterPro" id="IPR001518">
    <property type="entry name" value="Arginosuc_synth"/>
</dbReference>
<dbReference type="InterPro" id="IPR018223">
    <property type="entry name" value="Arginosuc_synth_CS"/>
</dbReference>
<dbReference type="InterPro" id="IPR023434">
    <property type="entry name" value="Arginosuc_synth_type_1_subfam"/>
</dbReference>
<dbReference type="InterPro" id="IPR024074">
    <property type="entry name" value="AS_cat/multimer_dom_body"/>
</dbReference>
<dbReference type="InterPro" id="IPR024073">
    <property type="entry name" value="AS_multimer_C_tail"/>
</dbReference>
<dbReference type="InterPro" id="IPR014729">
    <property type="entry name" value="Rossmann-like_a/b/a_fold"/>
</dbReference>
<dbReference type="NCBIfam" id="TIGR00032">
    <property type="entry name" value="argG"/>
    <property type="match status" value="1"/>
</dbReference>
<dbReference type="NCBIfam" id="NF003779">
    <property type="entry name" value="PRK05370.1"/>
    <property type="match status" value="1"/>
</dbReference>
<dbReference type="PANTHER" id="PTHR11587">
    <property type="entry name" value="ARGININOSUCCINATE SYNTHASE"/>
    <property type="match status" value="1"/>
</dbReference>
<dbReference type="PANTHER" id="PTHR11587:SF2">
    <property type="entry name" value="ARGININOSUCCINATE SYNTHASE"/>
    <property type="match status" value="1"/>
</dbReference>
<dbReference type="Pfam" id="PF20979">
    <property type="entry name" value="Arginosuc_syn_C"/>
    <property type="match status" value="1"/>
</dbReference>
<dbReference type="Pfam" id="PF00764">
    <property type="entry name" value="Arginosuc_synth"/>
    <property type="match status" value="1"/>
</dbReference>
<dbReference type="SUPFAM" id="SSF52402">
    <property type="entry name" value="Adenine nucleotide alpha hydrolases-like"/>
    <property type="match status" value="1"/>
</dbReference>
<dbReference type="SUPFAM" id="SSF69864">
    <property type="entry name" value="Argininosuccinate synthetase, C-terminal domain"/>
    <property type="match status" value="1"/>
</dbReference>
<dbReference type="PROSITE" id="PS00564">
    <property type="entry name" value="ARGININOSUCCIN_SYN_1"/>
    <property type="match status" value="1"/>
</dbReference>
<dbReference type="PROSITE" id="PS00565">
    <property type="entry name" value="ARGININOSUCCIN_SYN_2"/>
    <property type="match status" value="1"/>
</dbReference>
<evidence type="ECO:0000255" key="1">
    <source>
        <dbReference type="HAMAP-Rule" id="MF_00581"/>
    </source>
</evidence>
<keyword id="KW-0028">Amino-acid biosynthesis</keyword>
<keyword id="KW-0055">Arginine biosynthesis</keyword>
<keyword id="KW-0067">ATP-binding</keyword>
<keyword id="KW-0963">Cytoplasm</keyword>
<keyword id="KW-0436">Ligase</keyword>
<keyword id="KW-0547">Nucleotide-binding</keyword>
<reference key="1">
    <citation type="journal article" date="2009" name="PLoS Genet.">
        <title>Organised genome dynamics in the Escherichia coli species results in highly diverse adaptive paths.</title>
        <authorList>
            <person name="Touchon M."/>
            <person name="Hoede C."/>
            <person name="Tenaillon O."/>
            <person name="Barbe V."/>
            <person name="Baeriswyl S."/>
            <person name="Bidet P."/>
            <person name="Bingen E."/>
            <person name="Bonacorsi S."/>
            <person name="Bouchier C."/>
            <person name="Bouvet O."/>
            <person name="Calteau A."/>
            <person name="Chiapello H."/>
            <person name="Clermont O."/>
            <person name="Cruveiller S."/>
            <person name="Danchin A."/>
            <person name="Diard M."/>
            <person name="Dossat C."/>
            <person name="Karoui M.E."/>
            <person name="Frapy E."/>
            <person name="Garry L."/>
            <person name="Ghigo J.M."/>
            <person name="Gilles A.M."/>
            <person name="Johnson J."/>
            <person name="Le Bouguenec C."/>
            <person name="Lescat M."/>
            <person name="Mangenot S."/>
            <person name="Martinez-Jehanne V."/>
            <person name="Matic I."/>
            <person name="Nassif X."/>
            <person name="Oztas S."/>
            <person name="Petit M.A."/>
            <person name="Pichon C."/>
            <person name="Rouy Z."/>
            <person name="Ruf C.S."/>
            <person name="Schneider D."/>
            <person name="Tourret J."/>
            <person name="Vacherie B."/>
            <person name="Vallenet D."/>
            <person name="Medigue C."/>
            <person name="Rocha E.P.C."/>
            <person name="Denamur E."/>
        </authorList>
    </citation>
    <scope>NUCLEOTIDE SEQUENCE [LARGE SCALE GENOMIC DNA]</scope>
    <source>
        <strain>ED1a</strain>
    </source>
</reference>
<protein>
    <recommendedName>
        <fullName evidence="1">Argininosuccinate synthase</fullName>
        <ecNumber evidence="1">6.3.4.5</ecNumber>
    </recommendedName>
    <alternativeName>
        <fullName evidence="1">Citrulline--aspartate ligase</fullName>
    </alternativeName>
</protein>